<organism>
    <name type="scientific">Leptospira borgpetersenii serovar Hardjo-bovis (strain L550)</name>
    <dbReference type="NCBI Taxonomy" id="355276"/>
    <lineage>
        <taxon>Bacteria</taxon>
        <taxon>Pseudomonadati</taxon>
        <taxon>Spirochaetota</taxon>
        <taxon>Spirochaetia</taxon>
        <taxon>Leptospirales</taxon>
        <taxon>Leptospiraceae</taxon>
        <taxon>Leptospira</taxon>
    </lineage>
</organism>
<accession>Q04Y87</accession>
<keyword id="KW-0963">Cytoplasm</keyword>
<keyword id="KW-0489">Methyltransferase</keyword>
<keyword id="KW-0698">rRNA processing</keyword>
<keyword id="KW-0949">S-adenosyl-L-methionine</keyword>
<keyword id="KW-0808">Transferase</keyword>
<dbReference type="EC" id="2.1.1.199" evidence="1"/>
<dbReference type="EMBL" id="CP000348">
    <property type="protein sequence ID" value="ABJ79958.1"/>
    <property type="molecule type" value="Genomic_DNA"/>
</dbReference>
<dbReference type="SMR" id="Q04Y87"/>
<dbReference type="KEGG" id="lbl:LBL_2598"/>
<dbReference type="PATRIC" id="fig|355276.3.peg.3344"/>
<dbReference type="HOGENOM" id="CLU_038422_2_0_12"/>
<dbReference type="GO" id="GO:0005737">
    <property type="term" value="C:cytoplasm"/>
    <property type="evidence" value="ECO:0007669"/>
    <property type="project" value="UniProtKB-SubCell"/>
</dbReference>
<dbReference type="GO" id="GO:0071424">
    <property type="term" value="F:rRNA (cytosine-N4-)-methyltransferase activity"/>
    <property type="evidence" value="ECO:0007669"/>
    <property type="project" value="UniProtKB-UniRule"/>
</dbReference>
<dbReference type="GO" id="GO:0070475">
    <property type="term" value="P:rRNA base methylation"/>
    <property type="evidence" value="ECO:0007669"/>
    <property type="project" value="UniProtKB-UniRule"/>
</dbReference>
<dbReference type="Gene3D" id="1.10.150.170">
    <property type="entry name" value="Putative methyltransferase TM0872, insert domain"/>
    <property type="match status" value="1"/>
</dbReference>
<dbReference type="Gene3D" id="3.40.50.150">
    <property type="entry name" value="Vaccinia Virus protein VP39"/>
    <property type="match status" value="1"/>
</dbReference>
<dbReference type="HAMAP" id="MF_01007">
    <property type="entry name" value="16SrRNA_methyltr_H"/>
    <property type="match status" value="1"/>
</dbReference>
<dbReference type="InterPro" id="IPR002903">
    <property type="entry name" value="RsmH"/>
</dbReference>
<dbReference type="InterPro" id="IPR023397">
    <property type="entry name" value="SAM-dep_MeTrfase_MraW_recog"/>
</dbReference>
<dbReference type="InterPro" id="IPR029063">
    <property type="entry name" value="SAM-dependent_MTases_sf"/>
</dbReference>
<dbReference type="NCBIfam" id="TIGR00006">
    <property type="entry name" value="16S rRNA (cytosine(1402)-N(4))-methyltransferase RsmH"/>
    <property type="match status" value="1"/>
</dbReference>
<dbReference type="PANTHER" id="PTHR11265:SF0">
    <property type="entry name" value="12S RRNA N4-METHYLCYTIDINE METHYLTRANSFERASE"/>
    <property type="match status" value="1"/>
</dbReference>
<dbReference type="PANTHER" id="PTHR11265">
    <property type="entry name" value="S-ADENOSYL-METHYLTRANSFERASE MRAW"/>
    <property type="match status" value="1"/>
</dbReference>
<dbReference type="Pfam" id="PF01795">
    <property type="entry name" value="Methyltransf_5"/>
    <property type="match status" value="1"/>
</dbReference>
<dbReference type="PIRSF" id="PIRSF004486">
    <property type="entry name" value="MraW"/>
    <property type="match status" value="1"/>
</dbReference>
<dbReference type="SUPFAM" id="SSF81799">
    <property type="entry name" value="Putative methyltransferase TM0872, insert domain"/>
    <property type="match status" value="1"/>
</dbReference>
<dbReference type="SUPFAM" id="SSF53335">
    <property type="entry name" value="S-adenosyl-L-methionine-dependent methyltransferases"/>
    <property type="match status" value="1"/>
</dbReference>
<gene>
    <name evidence="1" type="primary">rsmH</name>
    <name type="synonym">mraW</name>
    <name type="ordered locus">LBL_2598</name>
</gene>
<protein>
    <recommendedName>
        <fullName evidence="1">Ribosomal RNA small subunit methyltransferase H</fullName>
        <ecNumber evidence="1">2.1.1.199</ecNumber>
    </recommendedName>
    <alternativeName>
        <fullName evidence="1">16S rRNA m(4)C1402 methyltransferase</fullName>
    </alternativeName>
    <alternativeName>
        <fullName evidence="1">rRNA (cytosine-N(4)-)-methyltransferase RsmH</fullName>
    </alternativeName>
</protein>
<evidence type="ECO:0000255" key="1">
    <source>
        <dbReference type="HAMAP-Rule" id="MF_01007"/>
    </source>
</evidence>
<evidence type="ECO:0000256" key="2">
    <source>
        <dbReference type="SAM" id="MobiDB-lite"/>
    </source>
</evidence>
<comment type="function">
    <text evidence="1">Specifically methylates the N4 position of cytidine in position 1402 (C1402) of 16S rRNA.</text>
</comment>
<comment type="catalytic activity">
    <reaction evidence="1">
        <text>cytidine(1402) in 16S rRNA + S-adenosyl-L-methionine = N(4)-methylcytidine(1402) in 16S rRNA + S-adenosyl-L-homocysteine + H(+)</text>
        <dbReference type="Rhea" id="RHEA:42928"/>
        <dbReference type="Rhea" id="RHEA-COMP:10286"/>
        <dbReference type="Rhea" id="RHEA-COMP:10287"/>
        <dbReference type="ChEBI" id="CHEBI:15378"/>
        <dbReference type="ChEBI" id="CHEBI:57856"/>
        <dbReference type="ChEBI" id="CHEBI:59789"/>
        <dbReference type="ChEBI" id="CHEBI:74506"/>
        <dbReference type="ChEBI" id="CHEBI:82748"/>
        <dbReference type="EC" id="2.1.1.199"/>
    </reaction>
</comment>
<comment type="subcellular location">
    <subcellularLocation>
        <location evidence="1">Cytoplasm</location>
    </subcellularLocation>
</comment>
<comment type="similarity">
    <text evidence="1">Belongs to the methyltransferase superfamily. RsmH family.</text>
</comment>
<feature type="chain" id="PRO_0000386957" description="Ribosomal RNA small subunit methyltransferase H">
    <location>
        <begin position="1"/>
        <end position="316"/>
    </location>
</feature>
<feature type="region of interest" description="Disordered" evidence="2">
    <location>
        <begin position="276"/>
        <end position="316"/>
    </location>
</feature>
<feature type="compositionally biased region" description="Basic and acidic residues" evidence="2">
    <location>
        <begin position="302"/>
        <end position="316"/>
    </location>
</feature>
<feature type="binding site" evidence="1">
    <location>
        <begin position="37"/>
        <end position="39"/>
    </location>
    <ligand>
        <name>S-adenosyl-L-methionine</name>
        <dbReference type="ChEBI" id="CHEBI:59789"/>
    </ligand>
</feature>
<feature type="binding site" evidence="1">
    <location>
        <position position="56"/>
    </location>
    <ligand>
        <name>S-adenosyl-L-methionine</name>
        <dbReference type="ChEBI" id="CHEBI:59789"/>
    </ligand>
</feature>
<feature type="binding site" evidence="1">
    <location>
        <position position="83"/>
    </location>
    <ligand>
        <name>S-adenosyl-L-methionine</name>
        <dbReference type="ChEBI" id="CHEBI:59789"/>
    </ligand>
</feature>
<feature type="binding site" evidence="1">
    <location>
        <position position="106"/>
    </location>
    <ligand>
        <name>S-adenosyl-L-methionine</name>
        <dbReference type="ChEBI" id="CHEBI:59789"/>
    </ligand>
</feature>
<feature type="binding site" evidence="1">
    <location>
        <position position="113"/>
    </location>
    <ligand>
        <name>S-adenosyl-L-methionine</name>
        <dbReference type="ChEBI" id="CHEBI:59789"/>
    </ligand>
</feature>
<name>RSMH_LEPBL</name>
<reference key="1">
    <citation type="journal article" date="2006" name="Proc. Natl. Acad. Sci. U.S.A.">
        <title>Genome reduction in Leptospira borgpetersenii reflects limited transmission potential.</title>
        <authorList>
            <person name="Bulach D.M."/>
            <person name="Zuerner R.L."/>
            <person name="Wilson P."/>
            <person name="Seemann T."/>
            <person name="McGrath A."/>
            <person name="Cullen P.A."/>
            <person name="Davis J."/>
            <person name="Johnson M."/>
            <person name="Kuczek E."/>
            <person name="Alt D.P."/>
            <person name="Peterson-Burch B."/>
            <person name="Coppel R.L."/>
            <person name="Rood J.I."/>
            <person name="Davies J.K."/>
            <person name="Adler B."/>
        </authorList>
    </citation>
    <scope>NUCLEOTIDE SEQUENCE [LARGE SCALE GENOMIC DNA]</scope>
    <source>
        <strain>L550</strain>
    </source>
</reference>
<sequence>MEPVHYSVQGNNILQIFTENFHKEDPVLFLDGTAGEGGHSLLFLKGFPNSKVILCDRDPVMLSRALARLVDFKERVVSIQTNFSEIDSNLLSSHGINDSPQGILLDLGISTFHLFHSGRGFSFKEAEPLDMRLTPNIGINAEDVINTYSKDRLMHIFYTYGEERWSKKIAEVIVERRKQNLISYTSELADLISKIIPRKLWPPGRHPATRIFQALRIEVNQELTHIEKGLDSLLNLLRPEGVIQVISFHSLEDRIVKNSLRNYAKQNGFELLTKKPILPSEEETKENPASRSAKLRVLRKTKSADKKYKKENSKEE</sequence>
<proteinExistence type="inferred from homology"/>